<proteinExistence type="inferred from homology"/>
<keyword id="KW-0067">ATP-binding</keyword>
<keyword id="KW-0119">Carbohydrate metabolism</keyword>
<keyword id="KW-0963">Cytoplasm</keyword>
<keyword id="KW-0299">Galactose metabolism</keyword>
<keyword id="KW-0418">Kinase</keyword>
<keyword id="KW-0460">Magnesium</keyword>
<keyword id="KW-0479">Metal-binding</keyword>
<keyword id="KW-0547">Nucleotide-binding</keyword>
<keyword id="KW-1185">Reference proteome</keyword>
<keyword id="KW-0808">Transferase</keyword>
<feature type="chain" id="PRO_0000184622" description="Galactokinase">
    <location>
        <begin position="1"/>
        <end position="382"/>
    </location>
</feature>
<feature type="active site" description="Proton acceptor" evidence="1">
    <location>
        <position position="174"/>
    </location>
</feature>
<feature type="binding site" evidence="1">
    <location>
        <begin position="34"/>
        <end position="37"/>
    </location>
    <ligand>
        <name>substrate</name>
    </ligand>
</feature>
<feature type="binding site" evidence="1">
    <location>
        <begin position="124"/>
        <end position="130"/>
    </location>
    <ligand>
        <name>ATP</name>
        <dbReference type="ChEBI" id="CHEBI:30616"/>
    </ligand>
</feature>
<feature type="binding site" evidence="1">
    <location>
        <position position="130"/>
    </location>
    <ligand>
        <name>Mg(2+)</name>
        <dbReference type="ChEBI" id="CHEBI:18420"/>
    </ligand>
</feature>
<feature type="binding site" evidence="1">
    <location>
        <position position="162"/>
    </location>
    <ligand>
        <name>Mg(2+)</name>
        <dbReference type="ChEBI" id="CHEBI:18420"/>
    </ligand>
</feature>
<feature type="binding site" evidence="1">
    <location>
        <position position="223"/>
    </location>
    <ligand>
        <name>substrate</name>
    </ligand>
</feature>
<feature type="site" description="Transition state stabilizer" evidence="1">
    <location>
        <position position="28"/>
    </location>
</feature>
<feature type="sequence conflict" description="In Ref. 1; AAA27113." evidence="2" ref="1">
    <original>KTRA</original>
    <variation>NASR</variation>
    <location>
        <begin position="6"/>
        <end position="9"/>
    </location>
</feature>
<feature type="sequence conflict" description="In Ref. 1; AAA27113." evidence="2" ref="1">
    <original>Q</original>
    <variation>L</variation>
    <location>
        <position position="105"/>
    </location>
</feature>
<feature type="sequence conflict" description="In Ref. 1; AAA27113." evidence="2" ref="1">
    <location>
        <position position="119"/>
    </location>
</feature>
<feature type="sequence conflict" description="In Ref. 1; AAA27113." evidence="2" ref="1">
    <location>
        <position position="151"/>
    </location>
</feature>
<protein>
    <recommendedName>
        <fullName evidence="1">Galactokinase</fullName>
        <ecNumber evidence="1">2.7.1.6</ecNumber>
    </recommendedName>
    <alternativeName>
        <fullName evidence="1">Galactose kinase</fullName>
    </alternativeName>
</protein>
<comment type="function">
    <text evidence="1">Catalyzes the transfer of the gamma-phosphate of ATP to D-galactose to form alpha-D-galactose-1-phosphate (Gal-1-P).</text>
</comment>
<comment type="catalytic activity">
    <reaction evidence="1">
        <text>alpha-D-galactose + ATP = alpha-D-galactose 1-phosphate + ADP + H(+)</text>
        <dbReference type="Rhea" id="RHEA:13553"/>
        <dbReference type="ChEBI" id="CHEBI:15378"/>
        <dbReference type="ChEBI" id="CHEBI:28061"/>
        <dbReference type="ChEBI" id="CHEBI:30616"/>
        <dbReference type="ChEBI" id="CHEBI:58336"/>
        <dbReference type="ChEBI" id="CHEBI:456216"/>
        <dbReference type="EC" id="2.7.1.6"/>
    </reaction>
</comment>
<comment type="pathway">
    <text evidence="1">Carbohydrate metabolism; galactose metabolism.</text>
</comment>
<comment type="subcellular location">
    <subcellularLocation>
        <location evidence="1">Cytoplasm</location>
    </subcellularLocation>
</comment>
<comment type="similarity">
    <text evidence="1">Belongs to the GHMP kinase family. GalK subfamily.</text>
</comment>
<name>GAL1_SALTY</name>
<gene>
    <name evidence="1" type="primary">galK</name>
    <name type="ordered locus">STM0774</name>
</gene>
<reference key="1">
    <citation type="journal article" date="1990" name="J. Bacteriol.">
        <title>Molecular cloning and physical and functional characterization of the Salmonella typhimurium and Salmonella typhi galactose utilization operons.</title>
        <authorList>
            <person name="Houng H.S.H."/>
            <person name="Kopecko D.J."/>
            <person name="Baron L.S."/>
        </authorList>
    </citation>
    <scope>NUCLEOTIDE SEQUENCE [GENOMIC DNA]</scope>
</reference>
<reference key="2">
    <citation type="journal article" date="2001" name="Nature">
        <title>Complete genome sequence of Salmonella enterica serovar Typhimurium LT2.</title>
        <authorList>
            <person name="McClelland M."/>
            <person name="Sanderson K.E."/>
            <person name="Spieth J."/>
            <person name="Clifton S.W."/>
            <person name="Latreille P."/>
            <person name="Courtney L."/>
            <person name="Porwollik S."/>
            <person name="Ali J."/>
            <person name="Dante M."/>
            <person name="Du F."/>
            <person name="Hou S."/>
            <person name="Layman D."/>
            <person name="Leonard S."/>
            <person name="Nguyen C."/>
            <person name="Scott K."/>
            <person name="Holmes A."/>
            <person name="Grewal N."/>
            <person name="Mulvaney E."/>
            <person name="Ryan E."/>
            <person name="Sun H."/>
            <person name="Florea L."/>
            <person name="Miller W."/>
            <person name="Stoneking T."/>
            <person name="Nhan M."/>
            <person name="Waterston R."/>
            <person name="Wilson R.K."/>
        </authorList>
    </citation>
    <scope>NUCLEOTIDE SEQUENCE [LARGE SCALE GENOMIC DNA]</scope>
    <source>
        <strain>LT2 / SGSC1412 / ATCC 700720</strain>
    </source>
</reference>
<accession>P22713</accession>
<dbReference type="EC" id="2.7.1.6" evidence="1"/>
<dbReference type="EMBL" id="M33681">
    <property type="protein sequence ID" value="AAA27113.1"/>
    <property type="molecule type" value="Genomic_DNA"/>
</dbReference>
<dbReference type="EMBL" id="AE006468">
    <property type="protein sequence ID" value="AAL19712.1"/>
    <property type="molecule type" value="Genomic_DNA"/>
</dbReference>
<dbReference type="PIR" id="C37760">
    <property type="entry name" value="C37760"/>
</dbReference>
<dbReference type="RefSeq" id="NP_459753.1">
    <property type="nucleotide sequence ID" value="NC_003197.2"/>
</dbReference>
<dbReference type="RefSeq" id="WP_001049367.1">
    <property type="nucleotide sequence ID" value="NC_003197.2"/>
</dbReference>
<dbReference type="SMR" id="P22713"/>
<dbReference type="STRING" id="99287.STM0774"/>
<dbReference type="PaxDb" id="99287-STM0774"/>
<dbReference type="GeneID" id="1252294"/>
<dbReference type="KEGG" id="stm:STM0774"/>
<dbReference type="PATRIC" id="fig|99287.12.peg.807"/>
<dbReference type="HOGENOM" id="CLU_017814_2_1_6"/>
<dbReference type="OMA" id="VMPCAIN"/>
<dbReference type="PhylomeDB" id="P22713"/>
<dbReference type="BioCyc" id="SENT99287:STM0774-MONOMER"/>
<dbReference type="UniPathway" id="UPA00214"/>
<dbReference type="Proteomes" id="UP000001014">
    <property type="component" value="Chromosome"/>
</dbReference>
<dbReference type="GO" id="GO:0005829">
    <property type="term" value="C:cytosol"/>
    <property type="evidence" value="ECO:0000318"/>
    <property type="project" value="GO_Central"/>
</dbReference>
<dbReference type="GO" id="GO:0005524">
    <property type="term" value="F:ATP binding"/>
    <property type="evidence" value="ECO:0007669"/>
    <property type="project" value="UniProtKB-UniRule"/>
</dbReference>
<dbReference type="GO" id="GO:0004335">
    <property type="term" value="F:galactokinase activity"/>
    <property type="evidence" value="ECO:0000318"/>
    <property type="project" value="GO_Central"/>
</dbReference>
<dbReference type="GO" id="GO:0000287">
    <property type="term" value="F:magnesium ion binding"/>
    <property type="evidence" value="ECO:0007669"/>
    <property type="project" value="UniProtKB-UniRule"/>
</dbReference>
<dbReference type="GO" id="GO:0006012">
    <property type="term" value="P:galactose metabolic process"/>
    <property type="evidence" value="ECO:0000318"/>
    <property type="project" value="GO_Central"/>
</dbReference>
<dbReference type="FunFam" id="3.30.230.10:FF:000017">
    <property type="entry name" value="Galactokinase"/>
    <property type="match status" value="1"/>
</dbReference>
<dbReference type="FunFam" id="3.30.70.890:FF:000001">
    <property type="entry name" value="Galactokinase"/>
    <property type="match status" value="1"/>
</dbReference>
<dbReference type="Gene3D" id="3.30.230.10">
    <property type="match status" value="1"/>
</dbReference>
<dbReference type="Gene3D" id="3.30.70.890">
    <property type="entry name" value="GHMP kinase, C-terminal domain"/>
    <property type="match status" value="1"/>
</dbReference>
<dbReference type="HAMAP" id="MF_00246">
    <property type="entry name" value="Galactokinase"/>
    <property type="match status" value="1"/>
</dbReference>
<dbReference type="InterPro" id="IPR000705">
    <property type="entry name" value="Galactokinase"/>
</dbReference>
<dbReference type="InterPro" id="IPR022963">
    <property type="entry name" value="Galactokinase_bac"/>
</dbReference>
<dbReference type="InterPro" id="IPR019741">
    <property type="entry name" value="Galactokinase_CS"/>
</dbReference>
<dbReference type="InterPro" id="IPR019539">
    <property type="entry name" value="GalKase_N"/>
</dbReference>
<dbReference type="InterPro" id="IPR013750">
    <property type="entry name" value="GHMP_kinase_C_dom"/>
</dbReference>
<dbReference type="InterPro" id="IPR036554">
    <property type="entry name" value="GHMP_kinase_C_sf"/>
</dbReference>
<dbReference type="InterPro" id="IPR006204">
    <property type="entry name" value="GHMP_kinase_N_dom"/>
</dbReference>
<dbReference type="InterPro" id="IPR006203">
    <property type="entry name" value="GHMP_knse_ATP-bd_CS"/>
</dbReference>
<dbReference type="InterPro" id="IPR006206">
    <property type="entry name" value="Mevalonate/galactokinase"/>
</dbReference>
<dbReference type="InterPro" id="IPR020568">
    <property type="entry name" value="Ribosomal_Su5_D2-typ_SF"/>
</dbReference>
<dbReference type="InterPro" id="IPR014721">
    <property type="entry name" value="Ribsml_uS5_D2-typ_fold_subgr"/>
</dbReference>
<dbReference type="NCBIfam" id="TIGR00131">
    <property type="entry name" value="gal_kin"/>
    <property type="match status" value="1"/>
</dbReference>
<dbReference type="NCBIfam" id="NF003472">
    <property type="entry name" value="PRK05101.1"/>
    <property type="match status" value="1"/>
</dbReference>
<dbReference type="PANTHER" id="PTHR10457:SF7">
    <property type="entry name" value="GALACTOKINASE-RELATED"/>
    <property type="match status" value="1"/>
</dbReference>
<dbReference type="PANTHER" id="PTHR10457">
    <property type="entry name" value="MEVALONATE KINASE/GALACTOKINASE"/>
    <property type="match status" value="1"/>
</dbReference>
<dbReference type="Pfam" id="PF10509">
    <property type="entry name" value="GalKase_gal_bdg"/>
    <property type="match status" value="1"/>
</dbReference>
<dbReference type="Pfam" id="PF08544">
    <property type="entry name" value="GHMP_kinases_C"/>
    <property type="match status" value="1"/>
</dbReference>
<dbReference type="Pfam" id="PF00288">
    <property type="entry name" value="GHMP_kinases_N"/>
    <property type="match status" value="1"/>
</dbReference>
<dbReference type="PIRSF" id="PIRSF000530">
    <property type="entry name" value="Galactokinase"/>
    <property type="match status" value="1"/>
</dbReference>
<dbReference type="PRINTS" id="PR00473">
    <property type="entry name" value="GALCTOKINASE"/>
</dbReference>
<dbReference type="PRINTS" id="PR00959">
    <property type="entry name" value="MEVGALKINASE"/>
</dbReference>
<dbReference type="SUPFAM" id="SSF55060">
    <property type="entry name" value="GHMP Kinase, C-terminal domain"/>
    <property type="match status" value="1"/>
</dbReference>
<dbReference type="SUPFAM" id="SSF54211">
    <property type="entry name" value="Ribosomal protein S5 domain 2-like"/>
    <property type="match status" value="1"/>
</dbReference>
<dbReference type="PROSITE" id="PS00106">
    <property type="entry name" value="GALACTOKINASE"/>
    <property type="match status" value="1"/>
</dbReference>
<dbReference type="PROSITE" id="PS00627">
    <property type="entry name" value="GHMP_KINASES_ATP"/>
    <property type="match status" value="1"/>
</dbReference>
<organism>
    <name type="scientific">Salmonella typhimurium (strain LT2 / SGSC1412 / ATCC 700720)</name>
    <dbReference type="NCBI Taxonomy" id="99287"/>
    <lineage>
        <taxon>Bacteria</taxon>
        <taxon>Pseudomonadati</taxon>
        <taxon>Pseudomonadota</taxon>
        <taxon>Gammaproteobacteria</taxon>
        <taxon>Enterobacterales</taxon>
        <taxon>Enterobacteriaceae</taxon>
        <taxon>Salmonella</taxon>
    </lineage>
</organism>
<evidence type="ECO:0000255" key="1">
    <source>
        <dbReference type="HAMAP-Rule" id="MF_00246"/>
    </source>
</evidence>
<evidence type="ECO:0000305" key="2"/>
<sequence length="382" mass="41302">MNLKEKTRALFAEIFGYPATHTIQAPGRVNLIGEHTDYNDGFVLPCAIDYQTVISCAPRDDRTVRVIAADYDNQVDEFSLDAPIVTHDSQQWSNYVRGVVKHLQQRNNAFGGVDMVISGNVPQGAGLSSSASLEVAVGTVFQQLYHLPLDGAQIALNGQEAENQFVGCNCGIMDQLISALGKKDHALLIDCRTLGAKAVSMPKGVAVVIINSNFKRTLVGSEYNTRREQCETGARFFQQPALRDVSLEAFNAVASELDPVVAKRVRHVLSENARTVEAASALEKGDLQRMGQLMAESHASMRDDFEITVPQIDTLVDIVKATIGDRGGVRMTGGGFGGCVVALIPEDLVPAVRQAVAQQYEAKTGIKETFYVCKPSQGAGQC</sequence>